<protein>
    <recommendedName>
        <fullName evidence="1">Putative double-stranded DNA mimic protein YciU</fullName>
    </recommendedName>
</protein>
<name>YCIU_ECO7I</name>
<dbReference type="EMBL" id="CU928164">
    <property type="protein sequence ID" value="CAR17715.1"/>
    <property type="molecule type" value="Genomic_DNA"/>
</dbReference>
<dbReference type="RefSeq" id="WP_000366959.1">
    <property type="nucleotide sequence ID" value="NC_011750.1"/>
</dbReference>
<dbReference type="RefSeq" id="YP_002407583.1">
    <property type="nucleotide sequence ID" value="NC_011750.1"/>
</dbReference>
<dbReference type="SMR" id="B7NVL7"/>
<dbReference type="STRING" id="585057.ECIAI39_1583"/>
<dbReference type="KEGG" id="ect:ECIAI39_1583"/>
<dbReference type="PATRIC" id="fig|585057.6.peg.1655"/>
<dbReference type="HOGENOM" id="CLU_143392_0_0_6"/>
<dbReference type="Proteomes" id="UP000000749">
    <property type="component" value="Chromosome"/>
</dbReference>
<dbReference type="Gene3D" id="3.10.450.140">
    <property type="entry name" value="dsDNA mimic, putative"/>
    <property type="match status" value="1"/>
</dbReference>
<dbReference type="HAMAP" id="MF_00680">
    <property type="entry name" value="Put_dsDNA_mimic"/>
    <property type="match status" value="1"/>
</dbReference>
<dbReference type="InterPro" id="IPR007376">
    <property type="entry name" value="dsDNA_mimic_put"/>
</dbReference>
<dbReference type="InterPro" id="IPR036763">
    <property type="entry name" value="Put_dsDNA_mimic_sf"/>
</dbReference>
<dbReference type="NCBIfam" id="NF003469">
    <property type="entry name" value="PRK05094.1"/>
    <property type="match status" value="1"/>
</dbReference>
<dbReference type="Pfam" id="PF04269">
    <property type="entry name" value="DUF440"/>
    <property type="match status" value="1"/>
</dbReference>
<dbReference type="PIRSF" id="PIRSF004916">
    <property type="entry name" value="UCP004916"/>
    <property type="match status" value="1"/>
</dbReference>
<dbReference type="SUPFAM" id="SSF102816">
    <property type="entry name" value="Putative dsDNA mimic"/>
    <property type="match status" value="1"/>
</dbReference>
<comment type="function">
    <text evidence="1">May act as a double-stranded DNA (dsDNA) mimic. Probably regulates the activity of a dsDNA-binding protein.</text>
</comment>
<comment type="similarity">
    <text evidence="1">Belongs to the putative dsDNA mimic protein family.</text>
</comment>
<organism>
    <name type="scientific">Escherichia coli O7:K1 (strain IAI39 / ExPEC)</name>
    <dbReference type="NCBI Taxonomy" id="585057"/>
    <lineage>
        <taxon>Bacteria</taxon>
        <taxon>Pseudomonadati</taxon>
        <taxon>Pseudomonadota</taxon>
        <taxon>Gammaproteobacteria</taxon>
        <taxon>Enterobacterales</taxon>
        <taxon>Enterobacteriaceae</taxon>
        <taxon>Escherichia</taxon>
    </lineage>
</organism>
<proteinExistence type="inferred from homology"/>
<evidence type="ECO:0000255" key="1">
    <source>
        <dbReference type="HAMAP-Rule" id="MF_00680"/>
    </source>
</evidence>
<gene>
    <name evidence="1" type="primary">yciU</name>
    <name type="ordered locus">ECIAI39_1583</name>
</gene>
<accession>B7NVL7</accession>
<feature type="chain" id="PRO_1000131702" description="Putative double-stranded DNA mimic protein YciU">
    <location>
        <begin position="1"/>
        <end position="109"/>
    </location>
</feature>
<sequence>MDMDLNNRLTEDETLEQAYDIFLELAADNLDPADVLLFNLQFEERGGAELFDPAEDWQEHVDFDLNPDFFAEVVIGLADSEDGEINDVFARILLCREKDHKLCHIIWRE</sequence>
<reference key="1">
    <citation type="journal article" date="2009" name="PLoS Genet.">
        <title>Organised genome dynamics in the Escherichia coli species results in highly diverse adaptive paths.</title>
        <authorList>
            <person name="Touchon M."/>
            <person name="Hoede C."/>
            <person name="Tenaillon O."/>
            <person name="Barbe V."/>
            <person name="Baeriswyl S."/>
            <person name="Bidet P."/>
            <person name="Bingen E."/>
            <person name="Bonacorsi S."/>
            <person name="Bouchier C."/>
            <person name="Bouvet O."/>
            <person name="Calteau A."/>
            <person name="Chiapello H."/>
            <person name="Clermont O."/>
            <person name="Cruveiller S."/>
            <person name="Danchin A."/>
            <person name="Diard M."/>
            <person name="Dossat C."/>
            <person name="Karoui M.E."/>
            <person name="Frapy E."/>
            <person name="Garry L."/>
            <person name="Ghigo J.M."/>
            <person name="Gilles A.M."/>
            <person name="Johnson J."/>
            <person name="Le Bouguenec C."/>
            <person name="Lescat M."/>
            <person name="Mangenot S."/>
            <person name="Martinez-Jehanne V."/>
            <person name="Matic I."/>
            <person name="Nassif X."/>
            <person name="Oztas S."/>
            <person name="Petit M.A."/>
            <person name="Pichon C."/>
            <person name="Rouy Z."/>
            <person name="Ruf C.S."/>
            <person name="Schneider D."/>
            <person name="Tourret J."/>
            <person name="Vacherie B."/>
            <person name="Vallenet D."/>
            <person name="Medigue C."/>
            <person name="Rocha E.P.C."/>
            <person name="Denamur E."/>
        </authorList>
    </citation>
    <scope>NUCLEOTIDE SEQUENCE [LARGE SCALE GENOMIC DNA]</scope>
    <source>
        <strain>IAI39 / ExPEC</strain>
    </source>
</reference>